<protein>
    <recommendedName>
        <fullName evidence="1">Glycine--tRNA ligase beta subunit</fullName>
        <ecNumber evidence="1">6.1.1.14</ecNumber>
    </recommendedName>
    <alternativeName>
        <fullName evidence="1">Glycyl-tRNA synthetase beta subunit</fullName>
        <shortName evidence="1">GlyRS</shortName>
    </alternativeName>
</protein>
<sequence length="664" mass="75601">MSELLLELFSEEMPAFMQKNAEEGYLNIFTKIFEENEIFAKVQVFVGPRRITLHATHLPKITLPKEEEIKGPSIEAPEAAINGFCKAHNVSKLELPTKLISNQLYYFFVKKTEEREIKEILPEIIIEAINKYSWAKSMFWGDYKIKWIRPLRNILCIFDGEILPMQFGHLTANNITYGHRLTDNKKLEVTDFEDYRNKLLENHVILERAKREAIIKTGLLELANSHELIIKEDNRLVEEVVGLSEFPVVLLGKIPQKFLELPKEVLISSMRTHQKYFCLFDKTGNFTPYFLFVSNGRFTNAELVIQGNEKVLSARLSDALYFCKQDIAKTLESRLGQLEAATFHAKLGNLREKIERITDICNYIAPNNKDLITAARLCKSDLVSEMVGEFPDLQGIMGYYYAKHEGLNAEIAAAIRDHYKPQGLSDNLPSGNAALLALADKLDSLVGLMIAGETPTGSGDPYALRRQALGIIRIILENKLELNFNDLINFSINLYKDSSDENKNLIISFFKERAKFYFKNDYDIALINAVLDLNLVDTNFKLDALKEFLIEDAGKQLLNAYKRASNIIGDQKITGLVDASLFSTQPEKELFEVIQKISPQIIDSIADKDYKKALNLLSSLLTPITSFFDNVLVNDSDPKIAQNRLSLLQNICELFDKVAKFNRL</sequence>
<organism>
    <name type="scientific">Rickettsia africae (strain ESF-5)</name>
    <dbReference type="NCBI Taxonomy" id="347255"/>
    <lineage>
        <taxon>Bacteria</taxon>
        <taxon>Pseudomonadati</taxon>
        <taxon>Pseudomonadota</taxon>
        <taxon>Alphaproteobacteria</taxon>
        <taxon>Rickettsiales</taxon>
        <taxon>Rickettsiaceae</taxon>
        <taxon>Rickettsieae</taxon>
        <taxon>Rickettsia</taxon>
        <taxon>spotted fever group</taxon>
    </lineage>
</organism>
<comment type="catalytic activity">
    <reaction evidence="1">
        <text>tRNA(Gly) + glycine + ATP = glycyl-tRNA(Gly) + AMP + diphosphate</text>
        <dbReference type="Rhea" id="RHEA:16013"/>
        <dbReference type="Rhea" id="RHEA-COMP:9664"/>
        <dbReference type="Rhea" id="RHEA-COMP:9683"/>
        <dbReference type="ChEBI" id="CHEBI:30616"/>
        <dbReference type="ChEBI" id="CHEBI:33019"/>
        <dbReference type="ChEBI" id="CHEBI:57305"/>
        <dbReference type="ChEBI" id="CHEBI:78442"/>
        <dbReference type="ChEBI" id="CHEBI:78522"/>
        <dbReference type="ChEBI" id="CHEBI:456215"/>
        <dbReference type="EC" id="6.1.1.14"/>
    </reaction>
</comment>
<comment type="subunit">
    <text evidence="1">Tetramer of two alpha and two beta subunits.</text>
</comment>
<comment type="subcellular location">
    <subcellularLocation>
        <location evidence="1">Cytoplasm</location>
    </subcellularLocation>
</comment>
<comment type="similarity">
    <text evidence="1">Belongs to the class-II aminoacyl-tRNA synthetase family.</text>
</comment>
<accession>C3PLY4</accession>
<gene>
    <name evidence="1" type="primary">glyS</name>
    <name type="ordered locus">RAF_ORF1203</name>
</gene>
<keyword id="KW-0030">Aminoacyl-tRNA synthetase</keyword>
<keyword id="KW-0067">ATP-binding</keyword>
<keyword id="KW-0963">Cytoplasm</keyword>
<keyword id="KW-0436">Ligase</keyword>
<keyword id="KW-0547">Nucleotide-binding</keyword>
<keyword id="KW-0648">Protein biosynthesis</keyword>
<name>SYGB_RICAE</name>
<dbReference type="EC" id="6.1.1.14" evidence="1"/>
<dbReference type="EMBL" id="CP001612">
    <property type="protein sequence ID" value="ACP53974.1"/>
    <property type="molecule type" value="Genomic_DNA"/>
</dbReference>
<dbReference type="RefSeq" id="WP_012720092.1">
    <property type="nucleotide sequence ID" value="NC_012633.1"/>
</dbReference>
<dbReference type="SMR" id="C3PLY4"/>
<dbReference type="KEGG" id="raf:RAF_ORF1203"/>
<dbReference type="HOGENOM" id="CLU_007220_2_1_5"/>
<dbReference type="Proteomes" id="UP000002305">
    <property type="component" value="Chromosome"/>
</dbReference>
<dbReference type="GO" id="GO:0005829">
    <property type="term" value="C:cytosol"/>
    <property type="evidence" value="ECO:0007669"/>
    <property type="project" value="TreeGrafter"/>
</dbReference>
<dbReference type="GO" id="GO:0004814">
    <property type="term" value="F:arginine-tRNA ligase activity"/>
    <property type="evidence" value="ECO:0007669"/>
    <property type="project" value="InterPro"/>
</dbReference>
<dbReference type="GO" id="GO:0005524">
    <property type="term" value="F:ATP binding"/>
    <property type="evidence" value="ECO:0007669"/>
    <property type="project" value="UniProtKB-UniRule"/>
</dbReference>
<dbReference type="GO" id="GO:0004820">
    <property type="term" value="F:glycine-tRNA ligase activity"/>
    <property type="evidence" value="ECO:0007669"/>
    <property type="project" value="UniProtKB-UniRule"/>
</dbReference>
<dbReference type="GO" id="GO:0006420">
    <property type="term" value="P:arginyl-tRNA aminoacylation"/>
    <property type="evidence" value="ECO:0007669"/>
    <property type="project" value="InterPro"/>
</dbReference>
<dbReference type="GO" id="GO:0006426">
    <property type="term" value="P:glycyl-tRNA aminoacylation"/>
    <property type="evidence" value="ECO:0007669"/>
    <property type="project" value="UniProtKB-UniRule"/>
</dbReference>
<dbReference type="HAMAP" id="MF_00255">
    <property type="entry name" value="Gly_tRNA_synth_beta"/>
    <property type="match status" value="1"/>
</dbReference>
<dbReference type="InterPro" id="IPR008909">
    <property type="entry name" value="DALR_anticod-bd"/>
</dbReference>
<dbReference type="InterPro" id="IPR015944">
    <property type="entry name" value="Gly-tRNA-synth_bsu"/>
</dbReference>
<dbReference type="InterPro" id="IPR006194">
    <property type="entry name" value="Gly-tRNA-synth_heterodimer"/>
</dbReference>
<dbReference type="NCBIfam" id="TIGR00211">
    <property type="entry name" value="glyS"/>
    <property type="match status" value="1"/>
</dbReference>
<dbReference type="PANTHER" id="PTHR30075:SF2">
    <property type="entry name" value="GLYCINE--TRNA LIGASE, CHLOROPLASTIC_MITOCHONDRIAL 2"/>
    <property type="match status" value="1"/>
</dbReference>
<dbReference type="PANTHER" id="PTHR30075">
    <property type="entry name" value="GLYCYL-TRNA SYNTHETASE"/>
    <property type="match status" value="1"/>
</dbReference>
<dbReference type="Pfam" id="PF05746">
    <property type="entry name" value="DALR_1"/>
    <property type="match status" value="1"/>
</dbReference>
<dbReference type="Pfam" id="PF02092">
    <property type="entry name" value="tRNA_synt_2f"/>
    <property type="match status" value="1"/>
</dbReference>
<dbReference type="PRINTS" id="PR01045">
    <property type="entry name" value="TRNASYNTHGB"/>
</dbReference>
<dbReference type="SUPFAM" id="SSF109604">
    <property type="entry name" value="HD-domain/PDEase-like"/>
    <property type="match status" value="1"/>
</dbReference>
<dbReference type="PROSITE" id="PS50861">
    <property type="entry name" value="AA_TRNA_LIGASE_II_GLYAB"/>
    <property type="match status" value="1"/>
</dbReference>
<evidence type="ECO:0000255" key="1">
    <source>
        <dbReference type="HAMAP-Rule" id="MF_00255"/>
    </source>
</evidence>
<feature type="chain" id="PRO_1000204610" description="Glycine--tRNA ligase beta subunit">
    <location>
        <begin position="1"/>
        <end position="664"/>
    </location>
</feature>
<reference key="1">
    <citation type="journal article" date="2009" name="BMC Genomics">
        <title>Analysis of the Rickettsia africae genome reveals that virulence acquisition in Rickettsia species may be explained by genome reduction.</title>
        <authorList>
            <person name="Fournier P.-E."/>
            <person name="El Karkouri K."/>
            <person name="Leroy Q."/>
            <person name="Robert C."/>
            <person name="Giumelli B."/>
            <person name="Renesto P."/>
            <person name="Socolovschi C."/>
            <person name="Parola P."/>
            <person name="Audic S."/>
            <person name="Raoult D."/>
        </authorList>
    </citation>
    <scope>NUCLEOTIDE SEQUENCE [LARGE SCALE GENOMIC DNA]</scope>
    <source>
        <strain>ESF-5</strain>
    </source>
</reference>
<proteinExistence type="inferred from homology"/>